<protein>
    <recommendedName>
        <fullName>Probable phospholipid hydroperoxide glutathione peroxidase</fullName>
        <shortName>PHGPx</shortName>
        <ecNumber>1.11.1.12</ecNumber>
    </recommendedName>
</protein>
<dbReference type="EC" id="1.11.1.12"/>
<dbReference type="EMBL" id="AL590442">
    <property type="protein sequence ID" value="CAD25075.1"/>
    <property type="molecule type" value="Genomic_DNA"/>
</dbReference>
<dbReference type="RefSeq" id="NP_584571.1">
    <property type="nucleotide sequence ID" value="NM_001040760.1"/>
</dbReference>
<dbReference type="SMR" id="Q8SSH7"/>
<dbReference type="FunCoup" id="Q8SSH7">
    <property type="interactions" value="41"/>
</dbReference>
<dbReference type="STRING" id="284813.Q8SSH7"/>
<dbReference type="PeroxiBase" id="5976">
    <property type="entry name" value="EcuGPx01"/>
</dbReference>
<dbReference type="GeneID" id="858561"/>
<dbReference type="KEGG" id="ecu:ECU02_0440"/>
<dbReference type="VEuPathDB" id="MicrosporidiaDB:ECU02_0440"/>
<dbReference type="HOGENOM" id="CLU_029507_0_1_1"/>
<dbReference type="InParanoid" id="Q8SSH7"/>
<dbReference type="OMA" id="QCGLTKQ"/>
<dbReference type="OrthoDB" id="446890at2759"/>
<dbReference type="Proteomes" id="UP000000819">
    <property type="component" value="Chromosome II"/>
</dbReference>
<dbReference type="GO" id="GO:0005737">
    <property type="term" value="C:cytoplasm"/>
    <property type="evidence" value="ECO:0007669"/>
    <property type="project" value="UniProtKB-SubCell"/>
</dbReference>
<dbReference type="GO" id="GO:0047066">
    <property type="term" value="F:phospholipid-hydroperoxide glutathione peroxidase activity"/>
    <property type="evidence" value="ECO:0007669"/>
    <property type="project" value="UniProtKB-EC"/>
</dbReference>
<dbReference type="GO" id="GO:0006979">
    <property type="term" value="P:response to oxidative stress"/>
    <property type="evidence" value="ECO:0007669"/>
    <property type="project" value="InterPro"/>
</dbReference>
<dbReference type="CDD" id="cd00340">
    <property type="entry name" value="GSH_Peroxidase"/>
    <property type="match status" value="1"/>
</dbReference>
<dbReference type="Gene3D" id="3.40.30.10">
    <property type="entry name" value="Glutaredoxin"/>
    <property type="match status" value="1"/>
</dbReference>
<dbReference type="InterPro" id="IPR000889">
    <property type="entry name" value="Glutathione_peroxidase"/>
</dbReference>
<dbReference type="InterPro" id="IPR036249">
    <property type="entry name" value="Thioredoxin-like_sf"/>
</dbReference>
<dbReference type="PANTHER" id="PTHR11592">
    <property type="entry name" value="GLUTATHIONE PEROXIDASE"/>
    <property type="match status" value="1"/>
</dbReference>
<dbReference type="PANTHER" id="PTHR11592:SF78">
    <property type="entry name" value="GLUTATHIONE PEROXIDASE"/>
    <property type="match status" value="1"/>
</dbReference>
<dbReference type="Pfam" id="PF00255">
    <property type="entry name" value="GSHPx"/>
    <property type="match status" value="1"/>
</dbReference>
<dbReference type="PIRSF" id="PIRSF000303">
    <property type="entry name" value="Glutathion_perox"/>
    <property type="match status" value="1"/>
</dbReference>
<dbReference type="PRINTS" id="PR01011">
    <property type="entry name" value="GLUTPROXDASE"/>
</dbReference>
<dbReference type="SUPFAM" id="SSF52833">
    <property type="entry name" value="Thioredoxin-like"/>
    <property type="match status" value="1"/>
</dbReference>
<dbReference type="PROSITE" id="PS51355">
    <property type="entry name" value="GLUTATHIONE_PEROXID_3"/>
    <property type="match status" value="1"/>
</dbReference>
<gene>
    <name type="ordered locus">ECU02_0440</name>
</gene>
<sequence length="177" mass="20029">MERGMESEAFYGLSARGWDGSEVSLGSFRGCVIMIANVASSCKFAESNYKSFAGLLDKFYRKGLRILLFPCNQYLGQESRPIEEIRGEVSKKYSDRFVVFDKVDVFGKGAHPVFRHLVNTKNGKGRLGNFIKWNFTKFLVDRKGCVVKRFGPSDIVKEDDENLLRSIEDGENGMQNS</sequence>
<feature type="chain" id="PRO_0000383333" description="Probable phospholipid hydroperoxide glutathione peroxidase">
    <location>
        <begin position="1"/>
        <end position="177"/>
    </location>
</feature>
<feature type="active site" evidence="2">
    <location>
        <position position="42"/>
    </location>
</feature>
<accession>Q8SSH7</accession>
<reference key="1">
    <citation type="journal article" date="2001" name="Nature">
        <title>Genome sequence and gene compaction of the eukaryote parasite Encephalitozoon cuniculi.</title>
        <authorList>
            <person name="Katinka M.D."/>
            <person name="Duprat S."/>
            <person name="Cornillot E."/>
            <person name="Metenier G."/>
            <person name="Thomarat F."/>
            <person name="Prensier G."/>
            <person name="Barbe V."/>
            <person name="Peyretaillade E."/>
            <person name="Brottier P."/>
            <person name="Wincker P."/>
            <person name="Delbac F."/>
            <person name="El Alaoui H."/>
            <person name="Peyret P."/>
            <person name="Saurin W."/>
            <person name="Gouy M."/>
            <person name="Weissenbach J."/>
            <person name="Vivares C.P."/>
        </authorList>
    </citation>
    <scope>NUCLEOTIDE SEQUENCE [LARGE SCALE GENOMIC DNA]</scope>
    <source>
        <strain>GB-M1</strain>
    </source>
</reference>
<reference key="2">
    <citation type="journal article" date="2006" name="Proteomics">
        <title>Proteomic analysis of the eukaryotic parasite Encephalitozoon cuniculi (microsporidia): a reference map for proteins expressed in late sporogonial stages.</title>
        <authorList>
            <person name="Brosson D."/>
            <person name="Kuhn L."/>
            <person name="Delbac F."/>
            <person name="Garin J."/>
            <person name="Vivares C.P."/>
            <person name="Texier C."/>
        </authorList>
    </citation>
    <scope>IDENTIFICATION BY MASS SPECTROMETRY [LARGE SCALE ANALYSIS]</scope>
    <scope>DEVELOPMENTAL STAGE</scope>
    <scope>SUBCELLULAR LOCATION</scope>
</reference>
<organism>
    <name type="scientific">Encephalitozoon cuniculi (strain GB-M1)</name>
    <name type="common">Microsporidian parasite</name>
    <dbReference type="NCBI Taxonomy" id="284813"/>
    <lineage>
        <taxon>Eukaryota</taxon>
        <taxon>Fungi</taxon>
        <taxon>Fungi incertae sedis</taxon>
        <taxon>Microsporidia</taxon>
        <taxon>Unikaryonidae</taxon>
        <taxon>Encephalitozoon</taxon>
    </lineage>
</organism>
<name>GPX_ENCCU</name>
<evidence type="ECO:0000250" key="1">
    <source>
        <dbReference type="UniProtKB" id="O70325"/>
    </source>
</evidence>
<evidence type="ECO:0000250" key="2">
    <source>
        <dbReference type="UniProtKB" id="P36968"/>
    </source>
</evidence>
<evidence type="ECO:0000269" key="3">
    <source>
    </source>
</evidence>
<evidence type="ECO:0000305" key="4"/>
<keyword id="KW-0963">Cytoplasm</keyword>
<keyword id="KW-0560">Oxidoreductase</keyword>
<keyword id="KW-0575">Peroxidase</keyword>
<keyword id="KW-1185">Reference proteome</keyword>
<keyword id="KW-0346">Stress response</keyword>
<comment type="function">
    <text evidence="1">Protects cells and enzymes from oxidative damage, by catalyzing the reduction of hydrogen peroxide, lipid peroxides and organic hydroperoxide, by glutathione.</text>
</comment>
<comment type="catalytic activity">
    <reaction evidence="2">
        <text>a hydroperoxy polyunsaturated fatty acid + 2 glutathione = a hydroxy polyunsaturated fatty acid + glutathione disulfide + H2O</text>
        <dbReference type="Rhea" id="RHEA:19057"/>
        <dbReference type="ChEBI" id="CHEBI:15377"/>
        <dbReference type="ChEBI" id="CHEBI:57925"/>
        <dbReference type="ChEBI" id="CHEBI:58297"/>
        <dbReference type="ChEBI" id="CHEBI:131871"/>
        <dbReference type="ChEBI" id="CHEBI:134019"/>
        <dbReference type="EC" id="1.11.1.12"/>
    </reaction>
</comment>
<comment type="subcellular location">
    <subcellularLocation>
        <location evidence="4">Cytoplasm</location>
    </subcellularLocation>
</comment>
<comment type="developmental stage">
    <text evidence="3">Expressed in late sporogonial stages.</text>
</comment>
<comment type="similarity">
    <text evidence="4">Belongs to the glutathione peroxidase family.</text>
</comment>
<proteinExistence type="evidence at protein level"/>